<protein>
    <recommendedName>
        <fullName evidence="1">ADP-L-glycero-D-manno-heptose-6-epimerase</fullName>
        <ecNumber evidence="1">5.1.3.20</ecNumber>
    </recommendedName>
    <alternativeName>
        <fullName evidence="1">ADP-L-glycero-beta-D-manno-heptose-6-epimerase</fullName>
        <shortName evidence="1">ADP-glyceromanno-heptose 6-epimerase</shortName>
        <shortName evidence="1">ADP-hep 6-epimerase</shortName>
        <shortName evidence="1">AGME</shortName>
    </alternativeName>
</protein>
<gene>
    <name evidence="1" type="primary">hldD</name>
    <name type="ordered locus">NTHI1278</name>
</gene>
<keyword id="KW-0119">Carbohydrate metabolism</keyword>
<keyword id="KW-0413">Isomerase</keyword>
<keyword id="KW-0521">NADP</keyword>
<sequence length="308" mass="34701">MIIVTGGAGFIGSNIVKALNDLGRKDILVVDNLKDGTKFANLVDLDIADYCDKEDFIASIIAGDEFGDIDAVFHEGACSATTEWDGKYIMHNNYEYSKELLHYCLDREIPFFYASSAATYGDTKVFREEREFEGPLNVYGYSKFLFDQYVRNILPEAKSPVCGFRYFNVYGPRENHKGSMASVAFHLNNQILKGENPKLFAGSEGFRRDFVYVGDVAAVNIWCWQNGISGIYNLGTGNAESFRAVADAVVKFHGKGEIETIPFPEHLKSRYQEYTQADLTKLRSTGYDKPFKTVAEGVTEYMAWLNRK</sequence>
<name>HLDD_HAEI8</name>
<feature type="chain" id="PRO_0000255731" description="ADP-L-glycero-D-manno-heptose-6-epimerase">
    <location>
        <begin position="1"/>
        <end position="308"/>
    </location>
</feature>
<feature type="active site" description="Proton acceptor" evidence="1">
    <location>
        <position position="139"/>
    </location>
</feature>
<feature type="active site" description="Proton acceptor" evidence="1">
    <location>
        <position position="177"/>
    </location>
</feature>
<feature type="binding site" evidence="1">
    <location>
        <begin position="10"/>
        <end position="11"/>
    </location>
    <ligand>
        <name>NADP(+)</name>
        <dbReference type="ChEBI" id="CHEBI:58349"/>
    </ligand>
</feature>
<feature type="binding site" evidence="1">
    <location>
        <begin position="31"/>
        <end position="32"/>
    </location>
    <ligand>
        <name>NADP(+)</name>
        <dbReference type="ChEBI" id="CHEBI:58349"/>
    </ligand>
</feature>
<feature type="binding site" evidence="1">
    <location>
        <position position="38"/>
    </location>
    <ligand>
        <name>NADP(+)</name>
        <dbReference type="ChEBI" id="CHEBI:58349"/>
    </ligand>
</feature>
<feature type="binding site" evidence="1">
    <location>
        <position position="53"/>
    </location>
    <ligand>
        <name>NADP(+)</name>
        <dbReference type="ChEBI" id="CHEBI:58349"/>
    </ligand>
</feature>
<feature type="binding site" evidence="1">
    <location>
        <begin position="75"/>
        <end position="79"/>
    </location>
    <ligand>
        <name>NADP(+)</name>
        <dbReference type="ChEBI" id="CHEBI:58349"/>
    </ligand>
</feature>
<feature type="binding site" evidence="1">
    <location>
        <position position="92"/>
    </location>
    <ligand>
        <name>NADP(+)</name>
        <dbReference type="ChEBI" id="CHEBI:58349"/>
    </ligand>
</feature>
<feature type="binding site" evidence="1">
    <location>
        <position position="143"/>
    </location>
    <ligand>
        <name>NADP(+)</name>
        <dbReference type="ChEBI" id="CHEBI:58349"/>
    </ligand>
</feature>
<feature type="binding site" evidence="1">
    <location>
        <position position="168"/>
    </location>
    <ligand>
        <name>substrate</name>
    </ligand>
</feature>
<feature type="binding site" evidence="1">
    <location>
        <position position="169"/>
    </location>
    <ligand>
        <name>NADP(+)</name>
        <dbReference type="ChEBI" id="CHEBI:58349"/>
    </ligand>
</feature>
<feature type="binding site" evidence="1">
    <location>
        <position position="177"/>
    </location>
    <ligand>
        <name>NADP(+)</name>
        <dbReference type="ChEBI" id="CHEBI:58349"/>
    </ligand>
</feature>
<feature type="binding site" evidence="1">
    <location>
        <position position="179"/>
    </location>
    <ligand>
        <name>substrate</name>
    </ligand>
</feature>
<feature type="binding site" evidence="1">
    <location>
        <position position="186"/>
    </location>
    <ligand>
        <name>substrate</name>
    </ligand>
</feature>
<feature type="binding site" evidence="1">
    <location>
        <begin position="200"/>
        <end position="203"/>
    </location>
    <ligand>
        <name>substrate</name>
    </ligand>
</feature>
<feature type="binding site" evidence="1">
    <location>
        <position position="208"/>
    </location>
    <ligand>
        <name>substrate</name>
    </ligand>
</feature>
<feature type="binding site" evidence="1">
    <location>
        <position position="271"/>
    </location>
    <ligand>
        <name>substrate</name>
    </ligand>
</feature>
<accession>Q4QLI0</accession>
<comment type="function">
    <text evidence="1">Catalyzes the interconversion between ADP-D-glycero-beta-D-manno-heptose and ADP-L-glycero-beta-D-manno-heptose via an epimerization at carbon 6 of the heptose.</text>
</comment>
<comment type="catalytic activity">
    <reaction evidence="1">
        <text>ADP-D-glycero-beta-D-manno-heptose = ADP-L-glycero-beta-D-manno-heptose</text>
        <dbReference type="Rhea" id="RHEA:17577"/>
        <dbReference type="ChEBI" id="CHEBI:59967"/>
        <dbReference type="ChEBI" id="CHEBI:61506"/>
        <dbReference type="EC" id="5.1.3.20"/>
    </reaction>
</comment>
<comment type="cofactor">
    <cofactor evidence="1">
        <name>NADP(+)</name>
        <dbReference type="ChEBI" id="CHEBI:58349"/>
    </cofactor>
    <text evidence="1">Binds 1 NADP(+) per subunit.</text>
</comment>
<comment type="pathway">
    <text evidence="1">Nucleotide-sugar biosynthesis; ADP-L-glycero-beta-D-manno-heptose biosynthesis; ADP-L-glycero-beta-D-manno-heptose from D-glycero-beta-D-manno-heptose 7-phosphate: step 4/4.</text>
</comment>
<comment type="subunit">
    <text evidence="1">Homopentamer.</text>
</comment>
<comment type="domain">
    <text evidence="1">Contains a large N-terminal NADP-binding domain, and a smaller C-terminal substrate-binding domain.</text>
</comment>
<comment type="similarity">
    <text evidence="1">Belongs to the NAD(P)-dependent epimerase/dehydratase family. HldD subfamily.</text>
</comment>
<reference key="1">
    <citation type="journal article" date="2005" name="J. Bacteriol.">
        <title>Genomic sequence of an otitis media isolate of nontypeable Haemophilus influenzae: comparative study with H. influenzae serotype d, strain KW20.</title>
        <authorList>
            <person name="Harrison A."/>
            <person name="Dyer D.W."/>
            <person name="Gillaspy A."/>
            <person name="Ray W.C."/>
            <person name="Mungur R."/>
            <person name="Carson M.B."/>
            <person name="Zhong H."/>
            <person name="Gipson J."/>
            <person name="Gipson M."/>
            <person name="Johnson L.S."/>
            <person name="Lewis L."/>
            <person name="Bakaletz L.O."/>
            <person name="Munson R.S. Jr."/>
        </authorList>
    </citation>
    <scope>NUCLEOTIDE SEQUENCE [LARGE SCALE GENOMIC DNA]</scope>
    <source>
        <strain>86-028NP</strain>
    </source>
</reference>
<dbReference type="EC" id="5.1.3.20" evidence="1"/>
<dbReference type="EMBL" id="CP000057">
    <property type="protein sequence ID" value="AAX88117.1"/>
    <property type="molecule type" value="Genomic_DNA"/>
</dbReference>
<dbReference type="SMR" id="Q4QLI0"/>
<dbReference type="KEGG" id="hit:NTHI1278"/>
<dbReference type="HOGENOM" id="CLU_007383_1_3_6"/>
<dbReference type="UniPathway" id="UPA00356">
    <property type="reaction ID" value="UER00440"/>
</dbReference>
<dbReference type="Proteomes" id="UP000002525">
    <property type="component" value="Chromosome"/>
</dbReference>
<dbReference type="GO" id="GO:0008712">
    <property type="term" value="F:ADP-glyceromanno-heptose 6-epimerase activity"/>
    <property type="evidence" value="ECO:0007669"/>
    <property type="project" value="UniProtKB-UniRule"/>
</dbReference>
<dbReference type="GO" id="GO:0050661">
    <property type="term" value="F:NADP binding"/>
    <property type="evidence" value="ECO:0007669"/>
    <property type="project" value="InterPro"/>
</dbReference>
<dbReference type="GO" id="GO:0097171">
    <property type="term" value="P:ADP-L-glycero-beta-D-manno-heptose biosynthetic process"/>
    <property type="evidence" value="ECO:0007669"/>
    <property type="project" value="UniProtKB-UniPathway"/>
</dbReference>
<dbReference type="GO" id="GO:0005975">
    <property type="term" value="P:carbohydrate metabolic process"/>
    <property type="evidence" value="ECO:0007669"/>
    <property type="project" value="UniProtKB-UniRule"/>
</dbReference>
<dbReference type="CDD" id="cd05248">
    <property type="entry name" value="ADP_GME_SDR_e"/>
    <property type="match status" value="1"/>
</dbReference>
<dbReference type="Gene3D" id="3.40.50.720">
    <property type="entry name" value="NAD(P)-binding Rossmann-like Domain"/>
    <property type="match status" value="1"/>
</dbReference>
<dbReference type="Gene3D" id="3.90.25.10">
    <property type="entry name" value="UDP-galactose 4-epimerase, domain 1"/>
    <property type="match status" value="1"/>
</dbReference>
<dbReference type="HAMAP" id="MF_01601">
    <property type="entry name" value="Heptose_epimerase"/>
    <property type="match status" value="1"/>
</dbReference>
<dbReference type="InterPro" id="IPR001509">
    <property type="entry name" value="Epimerase_deHydtase"/>
</dbReference>
<dbReference type="InterPro" id="IPR011912">
    <property type="entry name" value="Heptose_epim"/>
</dbReference>
<dbReference type="InterPro" id="IPR036291">
    <property type="entry name" value="NAD(P)-bd_dom_sf"/>
</dbReference>
<dbReference type="NCBIfam" id="TIGR02197">
    <property type="entry name" value="heptose_epim"/>
    <property type="match status" value="1"/>
</dbReference>
<dbReference type="NCBIfam" id="NF008360">
    <property type="entry name" value="PRK11150.1"/>
    <property type="match status" value="1"/>
</dbReference>
<dbReference type="PANTHER" id="PTHR43103:SF3">
    <property type="entry name" value="ADP-L-GLYCERO-D-MANNO-HEPTOSE-6-EPIMERASE"/>
    <property type="match status" value="1"/>
</dbReference>
<dbReference type="PANTHER" id="PTHR43103">
    <property type="entry name" value="NUCLEOSIDE-DIPHOSPHATE-SUGAR EPIMERASE"/>
    <property type="match status" value="1"/>
</dbReference>
<dbReference type="Pfam" id="PF01370">
    <property type="entry name" value="Epimerase"/>
    <property type="match status" value="1"/>
</dbReference>
<dbReference type="SUPFAM" id="SSF51735">
    <property type="entry name" value="NAD(P)-binding Rossmann-fold domains"/>
    <property type="match status" value="1"/>
</dbReference>
<proteinExistence type="inferred from homology"/>
<evidence type="ECO:0000255" key="1">
    <source>
        <dbReference type="HAMAP-Rule" id="MF_01601"/>
    </source>
</evidence>
<organism>
    <name type="scientific">Haemophilus influenzae (strain 86-028NP)</name>
    <dbReference type="NCBI Taxonomy" id="281310"/>
    <lineage>
        <taxon>Bacteria</taxon>
        <taxon>Pseudomonadati</taxon>
        <taxon>Pseudomonadota</taxon>
        <taxon>Gammaproteobacteria</taxon>
        <taxon>Pasteurellales</taxon>
        <taxon>Pasteurellaceae</taxon>
        <taxon>Haemophilus</taxon>
    </lineage>
</organism>